<organism>
    <name type="scientific">Xanthomonas campestris pv. campestris (strain ATCC 33913 / DSM 3586 / NCPPB 528 / LMG 568 / P 25)</name>
    <dbReference type="NCBI Taxonomy" id="190485"/>
    <lineage>
        <taxon>Bacteria</taxon>
        <taxon>Pseudomonadati</taxon>
        <taxon>Pseudomonadota</taxon>
        <taxon>Gammaproteobacteria</taxon>
        <taxon>Lysobacterales</taxon>
        <taxon>Lysobacteraceae</taxon>
        <taxon>Xanthomonas</taxon>
    </lineage>
</organism>
<proteinExistence type="inferred from homology"/>
<reference key="1">
    <citation type="journal article" date="2002" name="Nature">
        <title>Comparison of the genomes of two Xanthomonas pathogens with differing host specificities.</title>
        <authorList>
            <person name="da Silva A.C.R."/>
            <person name="Ferro J.A."/>
            <person name="Reinach F.C."/>
            <person name="Farah C.S."/>
            <person name="Furlan L.R."/>
            <person name="Quaggio R.B."/>
            <person name="Monteiro-Vitorello C.B."/>
            <person name="Van Sluys M.A."/>
            <person name="Almeida N.F. Jr."/>
            <person name="Alves L.M.C."/>
            <person name="do Amaral A.M."/>
            <person name="Bertolini M.C."/>
            <person name="Camargo L.E.A."/>
            <person name="Camarotte G."/>
            <person name="Cannavan F."/>
            <person name="Cardozo J."/>
            <person name="Chambergo F."/>
            <person name="Ciapina L.P."/>
            <person name="Cicarelli R.M.B."/>
            <person name="Coutinho L.L."/>
            <person name="Cursino-Santos J.R."/>
            <person name="El-Dorry H."/>
            <person name="Faria J.B."/>
            <person name="Ferreira A.J.S."/>
            <person name="Ferreira R.C.C."/>
            <person name="Ferro M.I.T."/>
            <person name="Formighieri E.F."/>
            <person name="Franco M.C."/>
            <person name="Greggio C.C."/>
            <person name="Gruber A."/>
            <person name="Katsuyama A.M."/>
            <person name="Kishi L.T."/>
            <person name="Leite R.P."/>
            <person name="Lemos E.G.M."/>
            <person name="Lemos M.V.F."/>
            <person name="Locali E.C."/>
            <person name="Machado M.A."/>
            <person name="Madeira A.M.B.N."/>
            <person name="Martinez-Rossi N.M."/>
            <person name="Martins E.C."/>
            <person name="Meidanis J."/>
            <person name="Menck C.F.M."/>
            <person name="Miyaki C.Y."/>
            <person name="Moon D.H."/>
            <person name="Moreira L.M."/>
            <person name="Novo M.T.M."/>
            <person name="Okura V.K."/>
            <person name="Oliveira M.C."/>
            <person name="Oliveira V.R."/>
            <person name="Pereira H.A."/>
            <person name="Rossi A."/>
            <person name="Sena J.A.D."/>
            <person name="Silva C."/>
            <person name="de Souza R.F."/>
            <person name="Spinola L.A.F."/>
            <person name="Takita M.A."/>
            <person name="Tamura R.E."/>
            <person name="Teixeira E.C."/>
            <person name="Tezza R.I.D."/>
            <person name="Trindade dos Santos M."/>
            <person name="Truffi D."/>
            <person name="Tsai S.M."/>
            <person name="White F.F."/>
            <person name="Setubal J.C."/>
            <person name="Kitajima J.P."/>
        </authorList>
    </citation>
    <scope>NUCLEOTIDE SEQUENCE [LARGE SCALE GENOMIC DNA]</scope>
    <source>
        <strain>ATCC 33913 / DSM 3586 / NCPPB 528 / LMG 568 / P 25</strain>
    </source>
</reference>
<protein>
    <recommendedName>
        <fullName evidence="1">Phenylalanine--tRNA ligase alpha subunit</fullName>
        <ecNumber evidence="1">6.1.1.20</ecNumber>
    </recommendedName>
    <alternativeName>
        <fullName evidence="1">Phenylalanyl-tRNA synthetase alpha subunit</fullName>
        <shortName evidence="1">PheRS</shortName>
    </alternativeName>
</protein>
<feature type="chain" id="PRO_0000126799" description="Phenylalanine--tRNA ligase alpha subunit">
    <location>
        <begin position="1"/>
        <end position="336"/>
    </location>
</feature>
<feature type="binding site" evidence="1">
    <location>
        <position position="257"/>
    </location>
    <ligand>
        <name>Mg(2+)</name>
        <dbReference type="ChEBI" id="CHEBI:18420"/>
        <note>shared with beta subunit</note>
    </ligand>
</feature>
<gene>
    <name evidence="1" type="primary">pheS</name>
    <name type="ordered locus">XCC2459</name>
</gene>
<comment type="catalytic activity">
    <reaction evidence="1">
        <text>tRNA(Phe) + L-phenylalanine + ATP = L-phenylalanyl-tRNA(Phe) + AMP + diphosphate + H(+)</text>
        <dbReference type="Rhea" id="RHEA:19413"/>
        <dbReference type="Rhea" id="RHEA-COMP:9668"/>
        <dbReference type="Rhea" id="RHEA-COMP:9699"/>
        <dbReference type="ChEBI" id="CHEBI:15378"/>
        <dbReference type="ChEBI" id="CHEBI:30616"/>
        <dbReference type="ChEBI" id="CHEBI:33019"/>
        <dbReference type="ChEBI" id="CHEBI:58095"/>
        <dbReference type="ChEBI" id="CHEBI:78442"/>
        <dbReference type="ChEBI" id="CHEBI:78531"/>
        <dbReference type="ChEBI" id="CHEBI:456215"/>
        <dbReference type="EC" id="6.1.1.20"/>
    </reaction>
</comment>
<comment type="cofactor">
    <cofactor evidence="1">
        <name>Mg(2+)</name>
        <dbReference type="ChEBI" id="CHEBI:18420"/>
    </cofactor>
    <text evidence="1">Binds 2 magnesium ions per tetramer.</text>
</comment>
<comment type="subunit">
    <text evidence="1">Tetramer of two alpha and two beta subunits.</text>
</comment>
<comment type="subcellular location">
    <subcellularLocation>
        <location evidence="1">Cytoplasm</location>
    </subcellularLocation>
</comment>
<comment type="similarity">
    <text evidence="1">Belongs to the class-II aminoacyl-tRNA synthetase family. Phe-tRNA synthetase alpha subunit type 1 subfamily.</text>
</comment>
<dbReference type="EC" id="6.1.1.20" evidence="1"/>
<dbReference type="EMBL" id="AE008922">
    <property type="protein sequence ID" value="AAM41735.1"/>
    <property type="molecule type" value="Genomic_DNA"/>
</dbReference>
<dbReference type="RefSeq" id="NP_637811.1">
    <property type="nucleotide sequence ID" value="NC_003902.1"/>
</dbReference>
<dbReference type="RefSeq" id="WP_011037597.1">
    <property type="nucleotide sequence ID" value="NC_003902.1"/>
</dbReference>
<dbReference type="SMR" id="Q8P7Z5"/>
<dbReference type="STRING" id="190485.XCC2459"/>
<dbReference type="EnsemblBacteria" id="AAM41735">
    <property type="protein sequence ID" value="AAM41735"/>
    <property type="gene ID" value="XCC2459"/>
</dbReference>
<dbReference type="KEGG" id="xcc:XCC2459"/>
<dbReference type="PATRIC" id="fig|190485.4.peg.2622"/>
<dbReference type="eggNOG" id="COG0016">
    <property type="taxonomic scope" value="Bacteria"/>
</dbReference>
<dbReference type="HOGENOM" id="CLU_025086_0_1_6"/>
<dbReference type="OrthoDB" id="9800719at2"/>
<dbReference type="Proteomes" id="UP000001010">
    <property type="component" value="Chromosome"/>
</dbReference>
<dbReference type="GO" id="GO:0005737">
    <property type="term" value="C:cytoplasm"/>
    <property type="evidence" value="ECO:0000318"/>
    <property type="project" value="GO_Central"/>
</dbReference>
<dbReference type="GO" id="GO:0005524">
    <property type="term" value="F:ATP binding"/>
    <property type="evidence" value="ECO:0007669"/>
    <property type="project" value="UniProtKB-UniRule"/>
</dbReference>
<dbReference type="GO" id="GO:0000287">
    <property type="term" value="F:magnesium ion binding"/>
    <property type="evidence" value="ECO:0007669"/>
    <property type="project" value="UniProtKB-UniRule"/>
</dbReference>
<dbReference type="GO" id="GO:0004826">
    <property type="term" value="F:phenylalanine-tRNA ligase activity"/>
    <property type="evidence" value="ECO:0000318"/>
    <property type="project" value="GO_Central"/>
</dbReference>
<dbReference type="GO" id="GO:0000049">
    <property type="term" value="F:tRNA binding"/>
    <property type="evidence" value="ECO:0007669"/>
    <property type="project" value="InterPro"/>
</dbReference>
<dbReference type="GO" id="GO:0006432">
    <property type="term" value="P:phenylalanyl-tRNA aminoacylation"/>
    <property type="evidence" value="ECO:0000318"/>
    <property type="project" value="GO_Central"/>
</dbReference>
<dbReference type="CDD" id="cd00496">
    <property type="entry name" value="PheRS_alpha_core"/>
    <property type="match status" value="1"/>
</dbReference>
<dbReference type="FunFam" id="3.30.930.10:FF:000003">
    <property type="entry name" value="Phenylalanine--tRNA ligase alpha subunit"/>
    <property type="match status" value="1"/>
</dbReference>
<dbReference type="Gene3D" id="3.30.930.10">
    <property type="entry name" value="Bira Bifunctional Protein, Domain 2"/>
    <property type="match status" value="1"/>
</dbReference>
<dbReference type="HAMAP" id="MF_00281">
    <property type="entry name" value="Phe_tRNA_synth_alpha1"/>
    <property type="match status" value="1"/>
</dbReference>
<dbReference type="InterPro" id="IPR006195">
    <property type="entry name" value="aa-tRNA-synth_II"/>
</dbReference>
<dbReference type="InterPro" id="IPR045864">
    <property type="entry name" value="aa-tRNA-synth_II/BPL/LPL"/>
</dbReference>
<dbReference type="InterPro" id="IPR004529">
    <property type="entry name" value="Phe-tRNA-synth_IIc_asu"/>
</dbReference>
<dbReference type="InterPro" id="IPR004188">
    <property type="entry name" value="Phe-tRNA_ligase_II_N"/>
</dbReference>
<dbReference type="InterPro" id="IPR022911">
    <property type="entry name" value="Phe_tRNA_ligase_alpha1_bac"/>
</dbReference>
<dbReference type="InterPro" id="IPR002319">
    <property type="entry name" value="Phenylalanyl-tRNA_Synthase"/>
</dbReference>
<dbReference type="InterPro" id="IPR010978">
    <property type="entry name" value="tRNA-bd_arm"/>
</dbReference>
<dbReference type="NCBIfam" id="TIGR00468">
    <property type="entry name" value="pheS"/>
    <property type="match status" value="1"/>
</dbReference>
<dbReference type="PANTHER" id="PTHR11538:SF41">
    <property type="entry name" value="PHENYLALANINE--TRNA LIGASE, MITOCHONDRIAL"/>
    <property type="match status" value="1"/>
</dbReference>
<dbReference type="PANTHER" id="PTHR11538">
    <property type="entry name" value="PHENYLALANYL-TRNA SYNTHETASE"/>
    <property type="match status" value="1"/>
</dbReference>
<dbReference type="Pfam" id="PF02912">
    <property type="entry name" value="Phe_tRNA-synt_N"/>
    <property type="match status" value="1"/>
</dbReference>
<dbReference type="Pfam" id="PF01409">
    <property type="entry name" value="tRNA-synt_2d"/>
    <property type="match status" value="1"/>
</dbReference>
<dbReference type="SUPFAM" id="SSF55681">
    <property type="entry name" value="Class II aaRS and biotin synthetases"/>
    <property type="match status" value="1"/>
</dbReference>
<dbReference type="SUPFAM" id="SSF46589">
    <property type="entry name" value="tRNA-binding arm"/>
    <property type="match status" value="1"/>
</dbReference>
<dbReference type="PROSITE" id="PS50862">
    <property type="entry name" value="AA_TRNA_LIGASE_II"/>
    <property type="match status" value="1"/>
</dbReference>
<keyword id="KW-0030">Aminoacyl-tRNA synthetase</keyword>
<keyword id="KW-0067">ATP-binding</keyword>
<keyword id="KW-0963">Cytoplasm</keyword>
<keyword id="KW-0436">Ligase</keyword>
<keyword id="KW-0460">Magnesium</keyword>
<keyword id="KW-0479">Metal-binding</keyword>
<keyword id="KW-0547">Nucleotide-binding</keyword>
<keyword id="KW-0648">Protein biosynthesis</keyword>
<keyword id="KW-1185">Reference proteome</keyword>
<name>SYFA_XANCP</name>
<evidence type="ECO:0000255" key="1">
    <source>
        <dbReference type="HAMAP-Rule" id="MF_00281"/>
    </source>
</evidence>
<sequence length="336" mass="37601">MSEIQSLTAQALADVAAAHTPDQLETLRVALLGKNGSITAQLKQLGTLPADQRKAAGEAINLARDALTTALSERKQVLETAALDARLEGERIDVTLPGRRGERGGLHPVTRTLERIVEIFARLGYELSDGPEIEDDWHNFEALNFPPHHPARAMHDTFYFGDGRLLRTHTSGVQVRYMDTAVATKSGPPLRMIAAGKVYRSDSDQTHSPMFHQVEGLLVDEHSNFADLKGTLSEFVRAFFERDFEMRFRPSYFPFVEPGAEVDIAWQQPDGSTRWLEVLGCGMVHPNVLRSVGIDPERYTGFAFGLGVERFAMLRYGVNDLRAFFENDVRFLRQFA</sequence>
<accession>Q8P7Z5</accession>